<keyword id="KW-0067">ATP-binding</keyword>
<keyword id="KW-0997">Cell inner membrane</keyword>
<keyword id="KW-1003">Cell membrane</keyword>
<keyword id="KW-0963">Cytoplasm</keyword>
<keyword id="KW-0472">Membrane</keyword>
<keyword id="KW-0479">Metal-binding</keyword>
<keyword id="KW-0547">Nucleotide-binding</keyword>
<keyword id="KW-0653">Protein transport</keyword>
<keyword id="KW-1185">Reference proteome</keyword>
<keyword id="KW-1278">Translocase</keyword>
<keyword id="KW-0811">Translocation</keyword>
<keyword id="KW-0813">Transport</keyword>
<keyword id="KW-0862">Zinc</keyword>
<feature type="chain" id="PRO_0000318476" description="Protein translocase subunit SecA">
    <location>
        <begin position="1"/>
        <end position="841"/>
    </location>
</feature>
<feature type="binding site" evidence="1">
    <location>
        <position position="87"/>
    </location>
    <ligand>
        <name>ATP</name>
        <dbReference type="ChEBI" id="CHEBI:30616"/>
    </ligand>
</feature>
<feature type="binding site" evidence="1">
    <location>
        <begin position="105"/>
        <end position="109"/>
    </location>
    <ligand>
        <name>ATP</name>
        <dbReference type="ChEBI" id="CHEBI:30616"/>
    </ligand>
</feature>
<feature type="binding site" evidence="1">
    <location>
        <position position="494"/>
    </location>
    <ligand>
        <name>ATP</name>
        <dbReference type="ChEBI" id="CHEBI:30616"/>
    </ligand>
</feature>
<feature type="binding site" evidence="1">
    <location>
        <position position="825"/>
    </location>
    <ligand>
        <name>Zn(2+)</name>
        <dbReference type="ChEBI" id="CHEBI:29105"/>
    </ligand>
</feature>
<feature type="binding site" evidence="1">
    <location>
        <position position="827"/>
    </location>
    <ligand>
        <name>Zn(2+)</name>
        <dbReference type="ChEBI" id="CHEBI:29105"/>
    </ligand>
</feature>
<feature type="binding site" evidence="1">
    <location>
        <position position="836"/>
    </location>
    <ligand>
        <name>Zn(2+)</name>
        <dbReference type="ChEBI" id="CHEBI:29105"/>
    </ligand>
</feature>
<feature type="binding site" evidence="1">
    <location>
        <position position="837"/>
    </location>
    <ligand>
        <name>Zn(2+)</name>
        <dbReference type="ChEBI" id="CHEBI:29105"/>
    </ligand>
</feature>
<gene>
    <name evidence="1" type="primary">secA</name>
    <name type="ordered locus">SYNAS_15790</name>
    <name type="ORF">SYN_01036</name>
</gene>
<sequence>MFASVLKKIVGTKNDRELKKYSLIQREINALESSIAALSDEQLKEKTPYFKEKLHTGASLDDILPEAFAVVREVARRTVNMRPFDVQLIGGMVLHEGKIAEMKTGEGKTLVATMPMYLNALEGKGAHLVTVNDYLASRDAEWMSPIYSFLGLSVGVIVHGMDDDERRAAYACDITYGTNNEFGFDYLRDNMKYSLEDYTQREFNYSIVDEVDSILIDEARTPLIISGPSEESTDKYYRINQIIPRLKKERDYTIDEKSRTVVLTEEGVARVESYLNVSNLYEPRNIDTLHHVNQALKAHTLFKRDVDYLVKDGQVIIVDEFTGRIMPGRRYSDGLHQALEAKEKVKIEQENQTLASITFQNFFRMYSKLAGMTGTADTEAAEFKKIYNLDVVVVPTNMPMIRVDHTDVIYKTEKEKFSAVIEEIKELHKAKRPVLVGTISIEKSELLSKYLTQTGIQHHVLNAKNHEKEAEIVSQAGQPGQVTISTNMAGRGTDIKLGERVAELGGLHILGTERHESRRIDNQLRGRSGRQGDMGSSRFYLSLEDDLLRIFGAEKISSIMDKIGIEENQPIEHKLISRAIENAQKRVEGQNFDIRKHLLEYDDVMNRQRQVIYEQRRNVLKGDELREDLLDMIEEVVEDFVPEYVDEKRHPDEWNLKGLEDRVLKQFSLRLDFSKSGDVGSLEDIQEKIVAAVNDLLNRKEAEFGKPLMDYLIRMISIQSIDSHWKDHLLAMDHLKEGIGLRGYGQKDPVREYQKEGYDLFMDMIRRIKEDTLEKLCMVQIRREEEVEEMREQSRQNYIMNRGEDIAAPATVRRKNEKVGRNDPCPCGSGKKYKKCCGANK</sequence>
<name>SECA_SYNAS</name>
<proteinExistence type="inferred from homology"/>
<comment type="function">
    <text evidence="1">Part of the Sec protein translocase complex. Interacts with the SecYEG preprotein conducting channel. Has a central role in coupling the hydrolysis of ATP to the transfer of proteins into and across the cell membrane, serving as an ATP-driven molecular motor driving the stepwise translocation of polypeptide chains across the membrane.</text>
</comment>
<comment type="catalytic activity">
    <reaction evidence="1">
        <text>ATP + H2O + cellular proteinSide 1 = ADP + phosphate + cellular proteinSide 2.</text>
        <dbReference type="EC" id="7.4.2.8"/>
    </reaction>
</comment>
<comment type="cofactor">
    <cofactor evidence="1">
        <name>Zn(2+)</name>
        <dbReference type="ChEBI" id="CHEBI:29105"/>
    </cofactor>
    <text evidence="1">May bind 1 zinc ion per subunit.</text>
</comment>
<comment type="subunit">
    <text evidence="1">Monomer and homodimer. Part of the essential Sec protein translocation apparatus which comprises SecA, SecYEG and auxiliary proteins SecDF-YajC and YidC.</text>
</comment>
<comment type="subcellular location">
    <subcellularLocation>
        <location evidence="1">Cell inner membrane</location>
        <topology evidence="1">Peripheral membrane protein</topology>
        <orientation evidence="1">Cytoplasmic side</orientation>
    </subcellularLocation>
    <subcellularLocation>
        <location evidence="1">Cytoplasm</location>
    </subcellularLocation>
    <text evidence="1">Distribution is 50-50.</text>
</comment>
<comment type="similarity">
    <text evidence="1">Belongs to the SecA family.</text>
</comment>
<comment type="sequence caution" evidence="2">
    <conflict type="erroneous initiation">
        <sequence resource="EMBL-CDS" id="ABC77458"/>
    </conflict>
    <text>Extended N-terminus.</text>
</comment>
<dbReference type="EC" id="7.4.2.8" evidence="1"/>
<dbReference type="EMBL" id="CP000252">
    <property type="protein sequence ID" value="ABC77458.1"/>
    <property type="status" value="ALT_INIT"/>
    <property type="molecule type" value="Genomic_DNA"/>
</dbReference>
<dbReference type="RefSeq" id="WP_011417480.1">
    <property type="nucleotide sequence ID" value="NC_007759.1"/>
</dbReference>
<dbReference type="SMR" id="Q2LTP4"/>
<dbReference type="FunCoup" id="Q2LTP4">
    <property type="interactions" value="546"/>
</dbReference>
<dbReference type="STRING" id="56780.SYN_01036"/>
<dbReference type="KEGG" id="sat:SYN_01036"/>
<dbReference type="eggNOG" id="COG0653">
    <property type="taxonomic scope" value="Bacteria"/>
</dbReference>
<dbReference type="HOGENOM" id="CLU_005314_3_0_7"/>
<dbReference type="InParanoid" id="Q2LTP4"/>
<dbReference type="OrthoDB" id="9805579at2"/>
<dbReference type="Proteomes" id="UP000001933">
    <property type="component" value="Chromosome"/>
</dbReference>
<dbReference type="GO" id="GO:0031522">
    <property type="term" value="C:cell envelope Sec protein transport complex"/>
    <property type="evidence" value="ECO:0007669"/>
    <property type="project" value="TreeGrafter"/>
</dbReference>
<dbReference type="GO" id="GO:0005829">
    <property type="term" value="C:cytosol"/>
    <property type="evidence" value="ECO:0007669"/>
    <property type="project" value="TreeGrafter"/>
</dbReference>
<dbReference type="GO" id="GO:0005886">
    <property type="term" value="C:plasma membrane"/>
    <property type="evidence" value="ECO:0007669"/>
    <property type="project" value="UniProtKB-SubCell"/>
</dbReference>
<dbReference type="GO" id="GO:0005524">
    <property type="term" value="F:ATP binding"/>
    <property type="evidence" value="ECO:0007669"/>
    <property type="project" value="UniProtKB-UniRule"/>
</dbReference>
<dbReference type="GO" id="GO:0046872">
    <property type="term" value="F:metal ion binding"/>
    <property type="evidence" value="ECO:0007669"/>
    <property type="project" value="UniProtKB-KW"/>
</dbReference>
<dbReference type="GO" id="GO:0008564">
    <property type="term" value="F:protein-exporting ATPase activity"/>
    <property type="evidence" value="ECO:0007669"/>
    <property type="project" value="UniProtKB-EC"/>
</dbReference>
<dbReference type="GO" id="GO:0065002">
    <property type="term" value="P:intracellular protein transmembrane transport"/>
    <property type="evidence" value="ECO:0007669"/>
    <property type="project" value="UniProtKB-UniRule"/>
</dbReference>
<dbReference type="GO" id="GO:0017038">
    <property type="term" value="P:protein import"/>
    <property type="evidence" value="ECO:0007669"/>
    <property type="project" value="InterPro"/>
</dbReference>
<dbReference type="GO" id="GO:0006605">
    <property type="term" value="P:protein targeting"/>
    <property type="evidence" value="ECO:0007669"/>
    <property type="project" value="UniProtKB-UniRule"/>
</dbReference>
<dbReference type="GO" id="GO:0043952">
    <property type="term" value="P:protein transport by the Sec complex"/>
    <property type="evidence" value="ECO:0007669"/>
    <property type="project" value="TreeGrafter"/>
</dbReference>
<dbReference type="CDD" id="cd17928">
    <property type="entry name" value="DEXDc_SecA"/>
    <property type="match status" value="1"/>
</dbReference>
<dbReference type="CDD" id="cd18803">
    <property type="entry name" value="SF2_C_secA"/>
    <property type="match status" value="1"/>
</dbReference>
<dbReference type="FunFam" id="3.40.50.300:FF:000429">
    <property type="entry name" value="Preprotein translocase subunit SecA"/>
    <property type="match status" value="1"/>
</dbReference>
<dbReference type="FunFam" id="3.90.1440.10:FF:000001">
    <property type="entry name" value="Preprotein translocase subunit SecA"/>
    <property type="match status" value="1"/>
</dbReference>
<dbReference type="FunFam" id="1.10.3060.10:FF:000003">
    <property type="entry name" value="Protein translocase subunit SecA"/>
    <property type="match status" value="1"/>
</dbReference>
<dbReference type="FunFam" id="3.40.50.300:FF:000334">
    <property type="entry name" value="Protein translocase subunit SecA"/>
    <property type="match status" value="1"/>
</dbReference>
<dbReference type="Gene3D" id="1.10.3060.10">
    <property type="entry name" value="Helical scaffold and wing domains of SecA"/>
    <property type="match status" value="1"/>
</dbReference>
<dbReference type="Gene3D" id="3.40.50.300">
    <property type="entry name" value="P-loop containing nucleotide triphosphate hydrolases"/>
    <property type="match status" value="3"/>
</dbReference>
<dbReference type="Gene3D" id="3.90.1440.10">
    <property type="entry name" value="SecA, preprotein cross-linking domain"/>
    <property type="match status" value="1"/>
</dbReference>
<dbReference type="HAMAP" id="MF_01382">
    <property type="entry name" value="SecA"/>
    <property type="match status" value="1"/>
</dbReference>
<dbReference type="InterPro" id="IPR014001">
    <property type="entry name" value="Helicase_ATP-bd"/>
</dbReference>
<dbReference type="InterPro" id="IPR001650">
    <property type="entry name" value="Helicase_C-like"/>
</dbReference>
<dbReference type="InterPro" id="IPR027417">
    <property type="entry name" value="P-loop_NTPase"/>
</dbReference>
<dbReference type="InterPro" id="IPR004027">
    <property type="entry name" value="SEC_C_motif"/>
</dbReference>
<dbReference type="InterPro" id="IPR000185">
    <property type="entry name" value="SecA"/>
</dbReference>
<dbReference type="InterPro" id="IPR020937">
    <property type="entry name" value="SecA_CS"/>
</dbReference>
<dbReference type="InterPro" id="IPR011115">
    <property type="entry name" value="SecA_DEAD"/>
</dbReference>
<dbReference type="InterPro" id="IPR014018">
    <property type="entry name" value="SecA_motor_DEAD"/>
</dbReference>
<dbReference type="InterPro" id="IPR011130">
    <property type="entry name" value="SecA_preprotein_X-link_dom"/>
</dbReference>
<dbReference type="InterPro" id="IPR044722">
    <property type="entry name" value="SecA_SF2_C"/>
</dbReference>
<dbReference type="InterPro" id="IPR011116">
    <property type="entry name" value="SecA_Wing/Scaffold"/>
</dbReference>
<dbReference type="InterPro" id="IPR036266">
    <property type="entry name" value="SecA_Wing/Scaffold_sf"/>
</dbReference>
<dbReference type="InterPro" id="IPR036670">
    <property type="entry name" value="SecA_X-link_sf"/>
</dbReference>
<dbReference type="NCBIfam" id="NF006630">
    <property type="entry name" value="PRK09200.1"/>
    <property type="match status" value="1"/>
</dbReference>
<dbReference type="NCBIfam" id="NF009538">
    <property type="entry name" value="PRK12904.1"/>
    <property type="match status" value="1"/>
</dbReference>
<dbReference type="NCBIfam" id="TIGR00963">
    <property type="entry name" value="secA"/>
    <property type="match status" value="1"/>
</dbReference>
<dbReference type="PANTHER" id="PTHR30612:SF0">
    <property type="entry name" value="CHLOROPLAST PROTEIN-TRANSPORTING ATPASE"/>
    <property type="match status" value="1"/>
</dbReference>
<dbReference type="PANTHER" id="PTHR30612">
    <property type="entry name" value="SECA INNER MEMBRANE COMPONENT OF SEC PROTEIN SECRETION SYSTEM"/>
    <property type="match status" value="1"/>
</dbReference>
<dbReference type="Pfam" id="PF21090">
    <property type="entry name" value="P-loop_SecA"/>
    <property type="match status" value="1"/>
</dbReference>
<dbReference type="Pfam" id="PF02810">
    <property type="entry name" value="SEC-C"/>
    <property type="match status" value="1"/>
</dbReference>
<dbReference type="Pfam" id="PF07517">
    <property type="entry name" value="SecA_DEAD"/>
    <property type="match status" value="1"/>
</dbReference>
<dbReference type="Pfam" id="PF01043">
    <property type="entry name" value="SecA_PP_bind"/>
    <property type="match status" value="1"/>
</dbReference>
<dbReference type="Pfam" id="PF07516">
    <property type="entry name" value="SecA_SW"/>
    <property type="match status" value="1"/>
</dbReference>
<dbReference type="PRINTS" id="PR00906">
    <property type="entry name" value="SECA"/>
</dbReference>
<dbReference type="SMART" id="SM00957">
    <property type="entry name" value="SecA_DEAD"/>
    <property type="match status" value="1"/>
</dbReference>
<dbReference type="SMART" id="SM00958">
    <property type="entry name" value="SecA_PP_bind"/>
    <property type="match status" value="1"/>
</dbReference>
<dbReference type="SUPFAM" id="SSF81886">
    <property type="entry name" value="Helical scaffold and wing domains of SecA"/>
    <property type="match status" value="1"/>
</dbReference>
<dbReference type="SUPFAM" id="SSF52540">
    <property type="entry name" value="P-loop containing nucleoside triphosphate hydrolases"/>
    <property type="match status" value="2"/>
</dbReference>
<dbReference type="SUPFAM" id="SSF81767">
    <property type="entry name" value="Pre-protein crosslinking domain of SecA"/>
    <property type="match status" value="1"/>
</dbReference>
<dbReference type="PROSITE" id="PS01312">
    <property type="entry name" value="SECA"/>
    <property type="match status" value="1"/>
</dbReference>
<dbReference type="PROSITE" id="PS51196">
    <property type="entry name" value="SECA_MOTOR_DEAD"/>
    <property type="match status" value="1"/>
</dbReference>
<protein>
    <recommendedName>
        <fullName evidence="1">Protein translocase subunit SecA</fullName>
        <ecNumber evidence="1">7.4.2.8</ecNumber>
    </recommendedName>
</protein>
<accession>Q2LTP4</accession>
<evidence type="ECO:0000255" key="1">
    <source>
        <dbReference type="HAMAP-Rule" id="MF_01382"/>
    </source>
</evidence>
<evidence type="ECO:0000305" key="2"/>
<reference key="1">
    <citation type="journal article" date="2007" name="Proc. Natl. Acad. Sci. U.S.A.">
        <title>The genome of Syntrophus aciditrophicus: life at the thermodynamic limit of microbial growth.</title>
        <authorList>
            <person name="McInerney M.J."/>
            <person name="Rohlin L."/>
            <person name="Mouttaki H."/>
            <person name="Kim U."/>
            <person name="Krupp R.S."/>
            <person name="Rios-Hernandez L."/>
            <person name="Sieber J."/>
            <person name="Struchtemeyer C.G."/>
            <person name="Bhattacharyya A."/>
            <person name="Campbell J.W."/>
            <person name="Gunsalus R.P."/>
        </authorList>
    </citation>
    <scope>NUCLEOTIDE SEQUENCE [LARGE SCALE GENOMIC DNA]</scope>
    <source>
        <strain>SB</strain>
    </source>
</reference>
<organism>
    <name type="scientific">Syntrophus aciditrophicus (strain SB)</name>
    <dbReference type="NCBI Taxonomy" id="56780"/>
    <lineage>
        <taxon>Bacteria</taxon>
        <taxon>Pseudomonadati</taxon>
        <taxon>Thermodesulfobacteriota</taxon>
        <taxon>Syntrophia</taxon>
        <taxon>Syntrophales</taxon>
        <taxon>Syntrophaceae</taxon>
        <taxon>Syntrophus</taxon>
    </lineage>
</organism>